<proteinExistence type="inferred from homology"/>
<feature type="chain" id="PRO_1000214569" description="Large ribosomal subunit protein uL4">
    <location>
        <begin position="1"/>
        <end position="201"/>
    </location>
</feature>
<feature type="region of interest" description="Disordered" evidence="2">
    <location>
        <begin position="44"/>
        <end position="71"/>
    </location>
</feature>
<accession>C4ZUH4</accession>
<evidence type="ECO:0000255" key="1">
    <source>
        <dbReference type="HAMAP-Rule" id="MF_01328"/>
    </source>
</evidence>
<evidence type="ECO:0000256" key="2">
    <source>
        <dbReference type="SAM" id="MobiDB-lite"/>
    </source>
</evidence>
<evidence type="ECO:0000305" key="3"/>
<reference key="1">
    <citation type="journal article" date="2009" name="J. Bacteriol.">
        <title>Genomic sequencing reveals regulatory mutations and recombinational events in the widely used MC4100 lineage of Escherichia coli K-12.</title>
        <authorList>
            <person name="Ferenci T."/>
            <person name="Zhou Z."/>
            <person name="Betteridge T."/>
            <person name="Ren Y."/>
            <person name="Liu Y."/>
            <person name="Feng L."/>
            <person name="Reeves P.R."/>
            <person name="Wang L."/>
        </authorList>
    </citation>
    <scope>NUCLEOTIDE SEQUENCE [LARGE SCALE GENOMIC DNA]</scope>
    <source>
        <strain>K12 / MC4100 / BW2952</strain>
    </source>
</reference>
<keyword id="KW-0687">Ribonucleoprotein</keyword>
<keyword id="KW-0689">Ribosomal protein</keyword>
<keyword id="KW-0694">RNA-binding</keyword>
<keyword id="KW-0699">rRNA-binding</keyword>
<comment type="function">
    <text evidence="1">One of the primary rRNA binding proteins, this protein initially binds near the 5'-end of the 23S rRNA. It is important during the early stages of 50S assembly. It makes multiple contacts with different domains of the 23S rRNA in the assembled 50S subunit and ribosome.</text>
</comment>
<comment type="function">
    <text evidence="1">Forms part of the polypeptide exit tunnel.</text>
</comment>
<comment type="subunit">
    <text evidence="1">Part of the 50S ribosomal subunit.</text>
</comment>
<comment type="similarity">
    <text evidence="1">Belongs to the universal ribosomal protein uL4 family.</text>
</comment>
<name>RL4_ECOBW</name>
<sequence length="201" mass="22087">MELVLKDAQSALTVSETTFGRDFNEALVHQVVVAYAAGARQGTRAQKTRAEVTGSGKKPWRQKGTGRARSGSIKSPIWRSGGVTFAARPQDHSQKVNKKMYRGALKSILSELVRQDRLIVVEKFSVEAPKTKLLAQKLKDMALEDVLIITGELDENLFLAARNLHKVDVRDATGIDPVSLIAFDKVVMTADAVKQVEEMLA</sequence>
<dbReference type="EMBL" id="CP001396">
    <property type="protein sequence ID" value="ACR61874.1"/>
    <property type="molecule type" value="Genomic_DNA"/>
</dbReference>
<dbReference type="RefSeq" id="WP_000424395.1">
    <property type="nucleotide sequence ID" value="NC_012759.1"/>
</dbReference>
<dbReference type="SMR" id="C4ZUH4"/>
<dbReference type="GeneID" id="97442859"/>
<dbReference type="KEGG" id="ebw:BWG_3010"/>
<dbReference type="HOGENOM" id="CLU_041575_5_2_6"/>
<dbReference type="GO" id="GO:1990904">
    <property type="term" value="C:ribonucleoprotein complex"/>
    <property type="evidence" value="ECO:0007669"/>
    <property type="project" value="UniProtKB-KW"/>
</dbReference>
<dbReference type="GO" id="GO:0005840">
    <property type="term" value="C:ribosome"/>
    <property type="evidence" value="ECO:0007669"/>
    <property type="project" value="UniProtKB-KW"/>
</dbReference>
<dbReference type="GO" id="GO:0019843">
    <property type="term" value="F:rRNA binding"/>
    <property type="evidence" value="ECO:0007669"/>
    <property type="project" value="UniProtKB-UniRule"/>
</dbReference>
<dbReference type="GO" id="GO:0003735">
    <property type="term" value="F:structural constituent of ribosome"/>
    <property type="evidence" value="ECO:0007669"/>
    <property type="project" value="InterPro"/>
</dbReference>
<dbReference type="GO" id="GO:0006412">
    <property type="term" value="P:translation"/>
    <property type="evidence" value="ECO:0007669"/>
    <property type="project" value="UniProtKB-UniRule"/>
</dbReference>
<dbReference type="FunFam" id="3.40.1370.10:FF:000001">
    <property type="entry name" value="50S ribosomal protein L4"/>
    <property type="match status" value="1"/>
</dbReference>
<dbReference type="Gene3D" id="3.40.1370.10">
    <property type="match status" value="1"/>
</dbReference>
<dbReference type="HAMAP" id="MF_01328_B">
    <property type="entry name" value="Ribosomal_uL4_B"/>
    <property type="match status" value="1"/>
</dbReference>
<dbReference type="InterPro" id="IPR002136">
    <property type="entry name" value="Ribosomal_uL4"/>
</dbReference>
<dbReference type="InterPro" id="IPR013005">
    <property type="entry name" value="Ribosomal_uL4-like"/>
</dbReference>
<dbReference type="InterPro" id="IPR023574">
    <property type="entry name" value="Ribosomal_uL4_dom_sf"/>
</dbReference>
<dbReference type="NCBIfam" id="TIGR03953">
    <property type="entry name" value="rplD_bact"/>
    <property type="match status" value="1"/>
</dbReference>
<dbReference type="PANTHER" id="PTHR10746">
    <property type="entry name" value="50S RIBOSOMAL PROTEIN L4"/>
    <property type="match status" value="1"/>
</dbReference>
<dbReference type="PANTHER" id="PTHR10746:SF6">
    <property type="entry name" value="LARGE RIBOSOMAL SUBUNIT PROTEIN UL4M"/>
    <property type="match status" value="1"/>
</dbReference>
<dbReference type="Pfam" id="PF00573">
    <property type="entry name" value="Ribosomal_L4"/>
    <property type="match status" value="1"/>
</dbReference>
<dbReference type="SUPFAM" id="SSF52166">
    <property type="entry name" value="Ribosomal protein L4"/>
    <property type="match status" value="1"/>
</dbReference>
<gene>
    <name evidence="1" type="primary">rplD</name>
    <name type="ordered locus">BWG_3010</name>
</gene>
<organism>
    <name type="scientific">Escherichia coli (strain K12 / MC4100 / BW2952)</name>
    <dbReference type="NCBI Taxonomy" id="595496"/>
    <lineage>
        <taxon>Bacteria</taxon>
        <taxon>Pseudomonadati</taxon>
        <taxon>Pseudomonadota</taxon>
        <taxon>Gammaproteobacteria</taxon>
        <taxon>Enterobacterales</taxon>
        <taxon>Enterobacteriaceae</taxon>
        <taxon>Escherichia</taxon>
    </lineage>
</organism>
<protein>
    <recommendedName>
        <fullName evidence="1">Large ribosomal subunit protein uL4</fullName>
    </recommendedName>
    <alternativeName>
        <fullName evidence="3">50S ribosomal protein L4</fullName>
    </alternativeName>
</protein>